<reference key="1">
    <citation type="submission" date="2007-03" db="EMBL/GenBank/DDBJ databases">
        <title>Genome sequence of Rhodospirillum centenum.</title>
        <authorList>
            <person name="Touchman J.W."/>
            <person name="Bauer C."/>
            <person name="Blankenship R.E."/>
        </authorList>
    </citation>
    <scope>NUCLEOTIDE SEQUENCE [LARGE SCALE GENOMIC DNA]</scope>
    <source>
        <strain>ATCC 51521 / SW</strain>
    </source>
</reference>
<protein>
    <recommendedName>
        <fullName evidence="1">Large ribosomal subunit protein uL16</fullName>
    </recommendedName>
    <alternativeName>
        <fullName evidence="2">50S ribosomal protein L16</fullName>
    </alternativeName>
</protein>
<proteinExistence type="inferred from homology"/>
<organism>
    <name type="scientific">Rhodospirillum centenum (strain ATCC 51521 / SW)</name>
    <dbReference type="NCBI Taxonomy" id="414684"/>
    <lineage>
        <taxon>Bacteria</taxon>
        <taxon>Pseudomonadati</taxon>
        <taxon>Pseudomonadota</taxon>
        <taxon>Alphaproteobacteria</taxon>
        <taxon>Rhodospirillales</taxon>
        <taxon>Rhodospirillaceae</taxon>
        <taxon>Rhodospirillum</taxon>
    </lineage>
</organism>
<feature type="chain" id="PRO_1000143018" description="Large ribosomal subunit protein uL16">
    <location>
        <begin position="1"/>
        <end position="141"/>
    </location>
</feature>
<name>RL16_RHOCS</name>
<keyword id="KW-1185">Reference proteome</keyword>
<keyword id="KW-0687">Ribonucleoprotein</keyword>
<keyword id="KW-0689">Ribosomal protein</keyword>
<keyword id="KW-0694">RNA-binding</keyword>
<keyword id="KW-0699">rRNA-binding</keyword>
<keyword id="KW-0820">tRNA-binding</keyword>
<accession>B6IRR3</accession>
<sequence length="141" mass="15643">MLSPKRTKYRKAHKGRIHGTAKGGTSLNFGAYGLKAVEPMRVTARQIESARRAITRHLKRQGRVWIRIFPDLPVSTKPAEVRMGSGKGSPEFWAARVHPGRIMFEVDGVPLDLAKRAFELAAAKLPIKTRFITRLGEGGEA</sequence>
<dbReference type="EMBL" id="CP000613">
    <property type="protein sequence ID" value="ACI98149.1"/>
    <property type="molecule type" value="Genomic_DNA"/>
</dbReference>
<dbReference type="RefSeq" id="WP_012565940.1">
    <property type="nucleotide sequence ID" value="NC_011420.2"/>
</dbReference>
<dbReference type="SMR" id="B6IRR3"/>
<dbReference type="STRING" id="414684.RC1_0718"/>
<dbReference type="KEGG" id="rce:RC1_0718"/>
<dbReference type="eggNOG" id="COG0197">
    <property type="taxonomic scope" value="Bacteria"/>
</dbReference>
<dbReference type="HOGENOM" id="CLU_078858_2_1_5"/>
<dbReference type="OrthoDB" id="9802589at2"/>
<dbReference type="Proteomes" id="UP000001591">
    <property type="component" value="Chromosome"/>
</dbReference>
<dbReference type="GO" id="GO:0022625">
    <property type="term" value="C:cytosolic large ribosomal subunit"/>
    <property type="evidence" value="ECO:0007669"/>
    <property type="project" value="TreeGrafter"/>
</dbReference>
<dbReference type="GO" id="GO:0019843">
    <property type="term" value="F:rRNA binding"/>
    <property type="evidence" value="ECO:0007669"/>
    <property type="project" value="UniProtKB-UniRule"/>
</dbReference>
<dbReference type="GO" id="GO:0003735">
    <property type="term" value="F:structural constituent of ribosome"/>
    <property type="evidence" value="ECO:0007669"/>
    <property type="project" value="InterPro"/>
</dbReference>
<dbReference type="GO" id="GO:0000049">
    <property type="term" value="F:tRNA binding"/>
    <property type="evidence" value="ECO:0007669"/>
    <property type="project" value="UniProtKB-KW"/>
</dbReference>
<dbReference type="GO" id="GO:0006412">
    <property type="term" value="P:translation"/>
    <property type="evidence" value="ECO:0007669"/>
    <property type="project" value="UniProtKB-UniRule"/>
</dbReference>
<dbReference type="CDD" id="cd01433">
    <property type="entry name" value="Ribosomal_L16_L10e"/>
    <property type="match status" value="1"/>
</dbReference>
<dbReference type="FunFam" id="3.90.1170.10:FF:000001">
    <property type="entry name" value="50S ribosomal protein L16"/>
    <property type="match status" value="1"/>
</dbReference>
<dbReference type="Gene3D" id="3.90.1170.10">
    <property type="entry name" value="Ribosomal protein L10e/L16"/>
    <property type="match status" value="1"/>
</dbReference>
<dbReference type="HAMAP" id="MF_01342">
    <property type="entry name" value="Ribosomal_uL16"/>
    <property type="match status" value="1"/>
</dbReference>
<dbReference type="InterPro" id="IPR047873">
    <property type="entry name" value="Ribosomal_uL16"/>
</dbReference>
<dbReference type="InterPro" id="IPR000114">
    <property type="entry name" value="Ribosomal_uL16_bact-type"/>
</dbReference>
<dbReference type="InterPro" id="IPR020798">
    <property type="entry name" value="Ribosomal_uL16_CS"/>
</dbReference>
<dbReference type="InterPro" id="IPR016180">
    <property type="entry name" value="Ribosomal_uL16_dom"/>
</dbReference>
<dbReference type="InterPro" id="IPR036920">
    <property type="entry name" value="Ribosomal_uL16_sf"/>
</dbReference>
<dbReference type="NCBIfam" id="TIGR01164">
    <property type="entry name" value="rplP_bact"/>
    <property type="match status" value="1"/>
</dbReference>
<dbReference type="PANTHER" id="PTHR12220">
    <property type="entry name" value="50S/60S RIBOSOMAL PROTEIN L16"/>
    <property type="match status" value="1"/>
</dbReference>
<dbReference type="PANTHER" id="PTHR12220:SF13">
    <property type="entry name" value="LARGE RIBOSOMAL SUBUNIT PROTEIN UL16M"/>
    <property type="match status" value="1"/>
</dbReference>
<dbReference type="Pfam" id="PF00252">
    <property type="entry name" value="Ribosomal_L16"/>
    <property type="match status" value="1"/>
</dbReference>
<dbReference type="PRINTS" id="PR00060">
    <property type="entry name" value="RIBOSOMALL16"/>
</dbReference>
<dbReference type="SUPFAM" id="SSF54686">
    <property type="entry name" value="Ribosomal protein L16p/L10e"/>
    <property type="match status" value="1"/>
</dbReference>
<dbReference type="PROSITE" id="PS00586">
    <property type="entry name" value="RIBOSOMAL_L16_1"/>
    <property type="match status" value="1"/>
</dbReference>
<dbReference type="PROSITE" id="PS00701">
    <property type="entry name" value="RIBOSOMAL_L16_2"/>
    <property type="match status" value="1"/>
</dbReference>
<comment type="function">
    <text evidence="1">Binds 23S rRNA and is also seen to make contacts with the A and possibly P site tRNAs.</text>
</comment>
<comment type="subunit">
    <text evidence="1">Part of the 50S ribosomal subunit.</text>
</comment>
<comment type="similarity">
    <text evidence="1">Belongs to the universal ribosomal protein uL16 family.</text>
</comment>
<gene>
    <name evidence="1" type="primary">rplP</name>
    <name type="ordered locus">RC1_0718</name>
</gene>
<evidence type="ECO:0000255" key="1">
    <source>
        <dbReference type="HAMAP-Rule" id="MF_01342"/>
    </source>
</evidence>
<evidence type="ECO:0000305" key="2"/>